<keyword id="KW-0067">ATP-binding</keyword>
<keyword id="KW-0378">Hydrolase</keyword>
<keyword id="KW-0547">Nucleotide-binding</keyword>
<keyword id="KW-1185">Reference proteome</keyword>
<protein>
    <recommendedName>
        <fullName evidence="1">5-oxoprolinase subunit A</fullName>
        <shortName evidence="1">5-OPase subunit A</shortName>
        <ecNumber evidence="1">3.5.2.9</ecNumber>
    </recommendedName>
    <alternativeName>
        <fullName evidence="1">5-oxoprolinase (ATP-hydrolyzing) subunit A</fullName>
    </alternativeName>
</protein>
<gene>
    <name evidence="1" type="primary">pxpA</name>
    <name type="ordered locus">Ecok1_06150</name>
    <name type="ORF">APECO1_1362</name>
</gene>
<proteinExistence type="inferred from homology"/>
<name>PXPA_ECOK1</name>
<dbReference type="EC" id="3.5.2.9" evidence="1"/>
<dbReference type="EMBL" id="CP000468">
    <property type="protein sequence ID" value="ABJ00109.1"/>
    <property type="molecule type" value="Genomic_DNA"/>
</dbReference>
<dbReference type="RefSeq" id="WP_000687123.1">
    <property type="nucleotide sequence ID" value="NZ_CADILS010000005.1"/>
</dbReference>
<dbReference type="SMR" id="A1A8W9"/>
<dbReference type="KEGG" id="ecv:APECO1_1362"/>
<dbReference type="HOGENOM" id="CLU_069535_0_0_6"/>
<dbReference type="Proteomes" id="UP000008216">
    <property type="component" value="Chromosome"/>
</dbReference>
<dbReference type="GO" id="GO:0017168">
    <property type="term" value="F:5-oxoprolinase (ATP-hydrolyzing) activity"/>
    <property type="evidence" value="ECO:0007669"/>
    <property type="project" value="UniProtKB-UniRule"/>
</dbReference>
<dbReference type="GO" id="GO:0005524">
    <property type="term" value="F:ATP binding"/>
    <property type="evidence" value="ECO:0007669"/>
    <property type="project" value="UniProtKB-UniRule"/>
</dbReference>
<dbReference type="GO" id="GO:0005975">
    <property type="term" value="P:carbohydrate metabolic process"/>
    <property type="evidence" value="ECO:0007669"/>
    <property type="project" value="InterPro"/>
</dbReference>
<dbReference type="CDD" id="cd10800">
    <property type="entry name" value="LamB_YcsF_YbgL_like"/>
    <property type="match status" value="1"/>
</dbReference>
<dbReference type="Gene3D" id="3.20.20.370">
    <property type="entry name" value="Glycoside hydrolase/deacetylase"/>
    <property type="match status" value="1"/>
</dbReference>
<dbReference type="HAMAP" id="MF_00691">
    <property type="entry name" value="PxpA"/>
    <property type="match status" value="1"/>
</dbReference>
<dbReference type="InterPro" id="IPR011330">
    <property type="entry name" value="Glyco_hydro/deAcase_b/a-brl"/>
</dbReference>
<dbReference type="InterPro" id="IPR005501">
    <property type="entry name" value="LamB/YcsF/PxpA-like"/>
</dbReference>
<dbReference type="NCBIfam" id="NF003812">
    <property type="entry name" value="PRK05406.1-1"/>
    <property type="match status" value="1"/>
</dbReference>
<dbReference type="NCBIfam" id="NF003814">
    <property type="entry name" value="PRK05406.1-3"/>
    <property type="match status" value="1"/>
</dbReference>
<dbReference type="NCBIfam" id="NF003815">
    <property type="entry name" value="PRK05406.1-4"/>
    <property type="match status" value="1"/>
</dbReference>
<dbReference type="NCBIfam" id="NF003816">
    <property type="entry name" value="PRK05406.1-5"/>
    <property type="match status" value="1"/>
</dbReference>
<dbReference type="PANTHER" id="PTHR30292:SF0">
    <property type="entry name" value="5-OXOPROLINASE SUBUNIT A"/>
    <property type="match status" value="1"/>
</dbReference>
<dbReference type="PANTHER" id="PTHR30292">
    <property type="entry name" value="UNCHARACTERIZED PROTEIN YBGL-RELATED"/>
    <property type="match status" value="1"/>
</dbReference>
<dbReference type="Pfam" id="PF03746">
    <property type="entry name" value="LamB_YcsF"/>
    <property type="match status" value="1"/>
</dbReference>
<dbReference type="SUPFAM" id="SSF88713">
    <property type="entry name" value="Glycoside hydrolase/deacetylase"/>
    <property type="match status" value="1"/>
</dbReference>
<feature type="chain" id="PRO_1000045202" description="5-oxoprolinase subunit A">
    <location>
        <begin position="1"/>
        <end position="244"/>
    </location>
</feature>
<accession>A1A8W9</accession>
<reference key="1">
    <citation type="journal article" date="2007" name="J. Bacteriol.">
        <title>The genome sequence of avian pathogenic Escherichia coli strain O1:K1:H7 shares strong similarities with human extraintestinal pathogenic E. coli genomes.</title>
        <authorList>
            <person name="Johnson T.J."/>
            <person name="Kariyawasam S."/>
            <person name="Wannemuehler Y."/>
            <person name="Mangiamele P."/>
            <person name="Johnson S.J."/>
            <person name="Doetkott C."/>
            <person name="Skyberg J.A."/>
            <person name="Lynne A.M."/>
            <person name="Johnson J.R."/>
            <person name="Nolan L.K."/>
        </authorList>
    </citation>
    <scope>NUCLEOTIDE SEQUENCE [LARGE SCALE GENOMIC DNA]</scope>
</reference>
<comment type="function">
    <text evidence="1">Catalyzes the cleavage of 5-oxoproline to form L-glutamate coupled to the hydrolysis of ATP to ADP and inorganic phosphate.</text>
</comment>
<comment type="catalytic activity">
    <reaction evidence="1">
        <text>5-oxo-L-proline + ATP + 2 H2O = L-glutamate + ADP + phosphate + H(+)</text>
        <dbReference type="Rhea" id="RHEA:10348"/>
        <dbReference type="ChEBI" id="CHEBI:15377"/>
        <dbReference type="ChEBI" id="CHEBI:15378"/>
        <dbReference type="ChEBI" id="CHEBI:29985"/>
        <dbReference type="ChEBI" id="CHEBI:30616"/>
        <dbReference type="ChEBI" id="CHEBI:43474"/>
        <dbReference type="ChEBI" id="CHEBI:58402"/>
        <dbReference type="ChEBI" id="CHEBI:456216"/>
        <dbReference type="EC" id="3.5.2.9"/>
    </reaction>
</comment>
<comment type="subunit">
    <text evidence="1">Forms a complex composed of PxpA, PxpB and PxpC.</text>
</comment>
<comment type="similarity">
    <text evidence="1">Belongs to the LamB/PxpA family.</text>
</comment>
<sequence length="244" mass="25856">MKIDLNADLGEGCASDAELLTLVSSANIACGFHAGDAQTMQACVREAIKNGVAIGAHPSFPDRENFGRSAMQLPPETVFAQTLYQIGALAAITRAQGGVMCHVKPHGMLYNQAAKEAQLADAIARAVYACDPALILVGLAGSELIRAGERYGLVTREEVFADRGYQADGSLVPRSQPGALIENEEQALAQTLEMVQYGRVKSITGEWAMVTAQTVCLHGDGEHALAFARRLRATFAEKGIVVAA</sequence>
<organism>
    <name type="scientific">Escherichia coli O1:K1 / APEC</name>
    <dbReference type="NCBI Taxonomy" id="405955"/>
    <lineage>
        <taxon>Bacteria</taxon>
        <taxon>Pseudomonadati</taxon>
        <taxon>Pseudomonadota</taxon>
        <taxon>Gammaproteobacteria</taxon>
        <taxon>Enterobacterales</taxon>
        <taxon>Enterobacteriaceae</taxon>
        <taxon>Escherichia</taxon>
    </lineage>
</organism>
<evidence type="ECO:0000255" key="1">
    <source>
        <dbReference type="HAMAP-Rule" id="MF_00691"/>
    </source>
</evidence>